<keyword id="KW-0067">ATP-binding</keyword>
<keyword id="KW-0963">Cytoplasm</keyword>
<keyword id="KW-0227">DNA damage</keyword>
<keyword id="KW-0233">DNA recombination</keyword>
<keyword id="KW-0234">DNA repair</keyword>
<keyword id="KW-0238">DNA-binding</keyword>
<keyword id="KW-0547">Nucleotide-binding</keyword>
<keyword id="KW-1185">Reference proteome</keyword>
<keyword id="KW-0742">SOS response</keyword>
<comment type="function">
    <text evidence="1">Can catalyze the hydrolysis of ATP in the presence of single-stranded DNA, the ATP-dependent uptake of single-stranded DNA by duplex DNA, and the ATP-dependent hybridization of homologous single-stranded DNAs. It interacts with LexA causing its activation and leading to its autocatalytic cleavage.</text>
</comment>
<comment type="subcellular location">
    <subcellularLocation>
        <location evidence="1">Cytoplasm</location>
    </subcellularLocation>
</comment>
<comment type="similarity">
    <text evidence="1">Belongs to the RecA family.</text>
</comment>
<proteinExistence type="inferred from homology"/>
<protein>
    <recommendedName>
        <fullName evidence="1">Protein RecA</fullName>
    </recommendedName>
    <alternativeName>
        <fullName evidence="1">Recombinase A</fullName>
    </alternativeName>
</protein>
<gene>
    <name evidence="1" type="primary">recA</name>
    <name type="ordered locus">Tola_2731</name>
</gene>
<feature type="chain" id="PRO_1000204718" description="Protein RecA">
    <location>
        <begin position="1"/>
        <end position="360"/>
    </location>
</feature>
<feature type="binding site" evidence="1">
    <location>
        <begin position="65"/>
        <end position="72"/>
    </location>
    <ligand>
        <name>ATP</name>
        <dbReference type="ChEBI" id="CHEBI:30616"/>
    </ligand>
</feature>
<evidence type="ECO:0000255" key="1">
    <source>
        <dbReference type="HAMAP-Rule" id="MF_00268"/>
    </source>
</evidence>
<organism>
    <name type="scientific">Tolumonas auensis (strain DSM 9187 / NBRC 110442 / TA 4)</name>
    <dbReference type="NCBI Taxonomy" id="595494"/>
    <lineage>
        <taxon>Bacteria</taxon>
        <taxon>Pseudomonadati</taxon>
        <taxon>Pseudomonadota</taxon>
        <taxon>Gammaproteobacteria</taxon>
        <taxon>Aeromonadales</taxon>
        <taxon>Aeromonadaceae</taxon>
        <taxon>Tolumonas</taxon>
    </lineage>
</organism>
<accession>C4LBQ0</accession>
<sequence length="360" mass="38578">MDSNKEKALAAALGQIEKQFGKGSIMRLGDTQSLDIDSIPTGSLSLDIALGIGGLPMGRIVEIFGPESSGKTTLTLEVIAQAQKAGKTCAFIDAEHALDPIYAGKLGVKVDDLLVSQPDTGEQALEICDMLVRSGAVDVIIIDSVAALTPKAEIEGDMGDSHVGLQARLMSQALRKLTGNIKNANCLCIFINQIRMKIGVMFGNPETTTGGNALKFYASVRLDIRRTGAIKDGEEIVGNETRVKVVKNKVAPPFKQADFQILYGEGISKESELIDLGVKCKLIDKSGAWYAYKGDKIGQGKANAMKYLKENTAAAEEIELKLRELLLSHNPPTEIAVAPVVEEFTPSDDELDSLSLSDDI</sequence>
<dbReference type="EMBL" id="CP001616">
    <property type="protein sequence ID" value="ACQ94324.1"/>
    <property type="molecule type" value="Genomic_DNA"/>
</dbReference>
<dbReference type="RefSeq" id="WP_015879773.1">
    <property type="nucleotide sequence ID" value="NC_012691.1"/>
</dbReference>
<dbReference type="SMR" id="C4LBQ0"/>
<dbReference type="STRING" id="595494.Tola_2731"/>
<dbReference type="KEGG" id="tau:Tola_2731"/>
<dbReference type="eggNOG" id="COG0468">
    <property type="taxonomic scope" value="Bacteria"/>
</dbReference>
<dbReference type="HOGENOM" id="CLU_040469_3_2_6"/>
<dbReference type="OrthoDB" id="9776733at2"/>
<dbReference type="Proteomes" id="UP000009073">
    <property type="component" value="Chromosome"/>
</dbReference>
<dbReference type="GO" id="GO:0005829">
    <property type="term" value="C:cytosol"/>
    <property type="evidence" value="ECO:0007669"/>
    <property type="project" value="TreeGrafter"/>
</dbReference>
<dbReference type="GO" id="GO:0005524">
    <property type="term" value="F:ATP binding"/>
    <property type="evidence" value="ECO:0007669"/>
    <property type="project" value="UniProtKB-UniRule"/>
</dbReference>
<dbReference type="GO" id="GO:0016887">
    <property type="term" value="F:ATP hydrolysis activity"/>
    <property type="evidence" value="ECO:0007669"/>
    <property type="project" value="InterPro"/>
</dbReference>
<dbReference type="GO" id="GO:0140664">
    <property type="term" value="F:ATP-dependent DNA damage sensor activity"/>
    <property type="evidence" value="ECO:0007669"/>
    <property type="project" value="InterPro"/>
</dbReference>
<dbReference type="GO" id="GO:0003684">
    <property type="term" value="F:damaged DNA binding"/>
    <property type="evidence" value="ECO:0007669"/>
    <property type="project" value="UniProtKB-UniRule"/>
</dbReference>
<dbReference type="GO" id="GO:0003697">
    <property type="term" value="F:single-stranded DNA binding"/>
    <property type="evidence" value="ECO:0007669"/>
    <property type="project" value="UniProtKB-UniRule"/>
</dbReference>
<dbReference type="GO" id="GO:0006310">
    <property type="term" value="P:DNA recombination"/>
    <property type="evidence" value="ECO:0007669"/>
    <property type="project" value="UniProtKB-UniRule"/>
</dbReference>
<dbReference type="GO" id="GO:0006281">
    <property type="term" value="P:DNA repair"/>
    <property type="evidence" value="ECO:0007669"/>
    <property type="project" value="UniProtKB-UniRule"/>
</dbReference>
<dbReference type="GO" id="GO:0009432">
    <property type="term" value="P:SOS response"/>
    <property type="evidence" value="ECO:0007669"/>
    <property type="project" value="UniProtKB-UniRule"/>
</dbReference>
<dbReference type="CDD" id="cd00983">
    <property type="entry name" value="RecA"/>
    <property type="match status" value="1"/>
</dbReference>
<dbReference type="FunFam" id="3.40.50.300:FF:000087">
    <property type="entry name" value="Recombinase RecA"/>
    <property type="match status" value="1"/>
</dbReference>
<dbReference type="Gene3D" id="3.40.50.300">
    <property type="entry name" value="P-loop containing nucleotide triphosphate hydrolases"/>
    <property type="match status" value="1"/>
</dbReference>
<dbReference type="HAMAP" id="MF_00268">
    <property type="entry name" value="RecA"/>
    <property type="match status" value="1"/>
</dbReference>
<dbReference type="InterPro" id="IPR003593">
    <property type="entry name" value="AAA+_ATPase"/>
</dbReference>
<dbReference type="InterPro" id="IPR013765">
    <property type="entry name" value="DNA_recomb/repair_RecA"/>
</dbReference>
<dbReference type="InterPro" id="IPR020584">
    <property type="entry name" value="DNA_recomb/repair_RecA_CS"/>
</dbReference>
<dbReference type="InterPro" id="IPR027417">
    <property type="entry name" value="P-loop_NTPase"/>
</dbReference>
<dbReference type="InterPro" id="IPR049261">
    <property type="entry name" value="RecA-like_C"/>
</dbReference>
<dbReference type="InterPro" id="IPR049428">
    <property type="entry name" value="RecA-like_N"/>
</dbReference>
<dbReference type="InterPro" id="IPR020588">
    <property type="entry name" value="RecA_ATP-bd"/>
</dbReference>
<dbReference type="InterPro" id="IPR023400">
    <property type="entry name" value="RecA_C_sf"/>
</dbReference>
<dbReference type="InterPro" id="IPR020587">
    <property type="entry name" value="RecA_monomer-monomer_interface"/>
</dbReference>
<dbReference type="NCBIfam" id="TIGR02012">
    <property type="entry name" value="tigrfam_recA"/>
    <property type="match status" value="1"/>
</dbReference>
<dbReference type="PANTHER" id="PTHR45900:SF1">
    <property type="entry name" value="MITOCHONDRIAL DNA REPAIR PROTEIN RECA HOMOLOG-RELATED"/>
    <property type="match status" value="1"/>
</dbReference>
<dbReference type="PANTHER" id="PTHR45900">
    <property type="entry name" value="RECA"/>
    <property type="match status" value="1"/>
</dbReference>
<dbReference type="Pfam" id="PF00154">
    <property type="entry name" value="RecA"/>
    <property type="match status" value="1"/>
</dbReference>
<dbReference type="Pfam" id="PF21096">
    <property type="entry name" value="RecA_C"/>
    <property type="match status" value="1"/>
</dbReference>
<dbReference type="PRINTS" id="PR00142">
    <property type="entry name" value="RECA"/>
</dbReference>
<dbReference type="SMART" id="SM00382">
    <property type="entry name" value="AAA"/>
    <property type="match status" value="1"/>
</dbReference>
<dbReference type="SUPFAM" id="SSF52540">
    <property type="entry name" value="P-loop containing nucleoside triphosphate hydrolases"/>
    <property type="match status" value="1"/>
</dbReference>
<dbReference type="SUPFAM" id="SSF54752">
    <property type="entry name" value="RecA protein, C-terminal domain"/>
    <property type="match status" value="1"/>
</dbReference>
<dbReference type="PROSITE" id="PS00321">
    <property type="entry name" value="RECA_1"/>
    <property type="match status" value="1"/>
</dbReference>
<dbReference type="PROSITE" id="PS50162">
    <property type="entry name" value="RECA_2"/>
    <property type="match status" value="1"/>
</dbReference>
<dbReference type="PROSITE" id="PS50163">
    <property type="entry name" value="RECA_3"/>
    <property type="match status" value="1"/>
</dbReference>
<name>RECA_TOLAT</name>
<reference key="1">
    <citation type="submission" date="2009-05" db="EMBL/GenBank/DDBJ databases">
        <title>Complete sequence of Tolumonas auensis DSM 9187.</title>
        <authorList>
            <consortium name="US DOE Joint Genome Institute"/>
            <person name="Lucas S."/>
            <person name="Copeland A."/>
            <person name="Lapidus A."/>
            <person name="Glavina del Rio T."/>
            <person name="Tice H."/>
            <person name="Bruce D."/>
            <person name="Goodwin L."/>
            <person name="Pitluck S."/>
            <person name="Chertkov O."/>
            <person name="Brettin T."/>
            <person name="Detter J.C."/>
            <person name="Han C."/>
            <person name="Larimer F."/>
            <person name="Land M."/>
            <person name="Hauser L."/>
            <person name="Kyrpides N."/>
            <person name="Mikhailova N."/>
            <person name="Spring S."/>
            <person name="Beller H."/>
        </authorList>
    </citation>
    <scope>NUCLEOTIDE SEQUENCE [LARGE SCALE GENOMIC DNA]</scope>
    <source>
        <strain>DSM 9187 / NBRC 110442 / TA 4</strain>
    </source>
</reference>